<name>RSMA_SHEWM</name>
<proteinExistence type="inferred from homology"/>
<feature type="chain" id="PRO_1000130322" description="Ribosomal RNA small subunit methyltransferase A">
    <location>
        <begin position="1"/>
        <end position="267"/>
    </location>
</feature>
<feature type="binding site" evidence="1">
    <location>
        <position position="18"/>
    </location>
    <ligand>
        <name>S-adenosyl-L-methionine</name>
        <dbReference type="ChEBI" id="CHEBI:59789"/>
    </ligand>
</feature>
<feature type="binding site" evidence="1">
    <location>
        <position position="20"/>
    </location>
    <ligand>
        <name>S-adenosyl-L-methionine</name>
        <dbReference type="ChEBI" id="CHEBI:59789"/>
    </ligand>
</feature>
<feature type="binding site" evidence="1">
    <location>
        <position position="45"/>
    </location>
    <ligand>
        <name>S-adenosyl-L-methionine</name>
        <dbReference type="ChEBI" id="CHEBI:59789"/>
    </ligand>
</feature>
<feature type="binding site" evidence="1">
    <location>
        <position position="66"/>
    </location>
    <ligand>
        <name>S-adenosyl-L-methionine</name>
        <dbReference type="ChEBI" id="CHEBI:59789"/>
    </ligand>
</feature>
<feature type="binding site" evidence="1">
    <location>
        <position position="91"/>
    </location>
    <ligand>
        <name>S-adenosyl-L-methionine</name>
        <dbReference type="ChEBI" id="CHEBI:59789"/>
    </ligand>
</feature>
<feature type="binding site" evidence="1">
    <location>
        <position position="112"/>
    </location>
    <ligand>
        <name>S-adenosyl-L-methionine</name>
        <dbReference type="ChEBI" id="CHEBI:59789"/>
    </ligand>
</feature>
<sequence length="267" mass="30249">MSNKVHLGHTARKRFGQNFLTDHNVINRIVGAISPDNDHVMVEIGPGLAALTEPVANAIDKLTVVELDKDLVARLQEHPTLKDKLDIHQGDALQFDFSQLVEEGRQMKVFGNLPYNISTPLMFHLFEFAEQIENMHFMLQKEVVLRLSASPGTKAYGRLTVMAQYHCQVMPVLEVPPGSFTPPPKVDSAVVRLVPYKVKPWPCKDVDQLRHLTTTAFNMRRKTLRNNLKHMISDEEFAELGIDATLRPEQITVEQYVAMANFVVDKQ</sequence>
<evidence type="ECO:0000255" key="1">
    <source>
        <dbReference type="HAMAP-Rule" id="MF_00607"/>
    </source>
</evidence>
<keyword id="KW-0963">Cytoplasm</keyword>
<keyword id="KW-0489">Methyltransferase</keyword>
<keyword id="KW-1185">Reference proteome</keyword>
<keyword id="KW-0694">RNA-binding</keyword>
<keyword id="KW-0698">rRNA processing</keyword>
<keyword id="KW-0949">S-adenosyl-L-methionine</keyword>
<keyword id="KW-0808">Transferase</keyword>
<comment type="function">
    <text evidence="1">Specifically dimethylates two adjacent adenosines (A1518 and A1519) in the loop of a conserved hairpin near the 3'-end of 16S rRNA in the 30S particle. May play a critical role in biogenesis of 30S subunits.</text>
</comment>
<comment type="catalytic activity">
    <reaction evidence="1">
        <text>adenosine(1518)/adenosine(1519) in 16S rRNA + 4 S-adenosyl-L-methionine = N(6)-dimethyladenosine(1518)/N(6)-dimethyladenosine(1519) in 16S rRNA + 4 S-adenosyl-L-homocysteine + 4 H(+)</text>
        <dbReference type="Rhea" id="RHEA:19609"/>
        <dbReference type="Rhea" id="RHEA-COMP:10232"/>
        <dbReference type="Rhea" id="RHEA-COMP:10233"/>
        <dbReference type="ChEBI" id="CHEBI:15378"/>
        <dbReference type="ChEBI" id="CHEBI:57856"/>
        <dbReference type="ChEBI" id="CHEBI:59789"/>
        <dbReference type="ChEBI" id="CHEBI:74411"/>
        <dbReference type="ChEBI" id="CHEBI:74493"/>
        <dbReference type="EC" id="2.1.1.182"/>
    </reaction>
</comment>
<comment type="subcellular location">
    <subcellularLocation>
        <location evidence="1">Cytoplasm</location>
    </subcellularLocation>
</comment>
<comment type="similarity">
    <text evidence="1">Belongs to the class I-like SAM-binding methyltransferase superfamily. rRNA adenine N(6)-methyltransferase family. RsmA subfamily.</text>
</comment>
<organism>
    <name type="scientific">Shewanella woodyi (strain ATCC 51908 / MS32)</name>
    <dbReference type="NCBI Taxonomy" id="392500"/>
    <lineage>
        <taxon>Bacteria</taxon>
        <taxon>Pseudomonadati</taxon>
        <taxon>Pseudomonadota</taxon>
        <taxon>Gammaproteobacteria</taxon>
        <taxon>Alteromonadales</taxon>
        <taxon>Shewanellaceae</taxon>
        <taxon>Shewanella</taxon>
    </lineage>
</organism>
<protein>
    <recommendedName>
        <fullName evidence="1">Ribosomal RNA small subunit methyltransferase A</fullName>
        <ecNumber evidence="1">2.1.1.182</ecNumber>
    </recommendedName>
    <alternativeName>
        <fullName evidence="1">16S rRNA (adenine(1518)-N(6)/adenine(1519)-N(6))-dimethyltransferase</fullName>
    </alternativeName>
    <alternativeName>
        <fullName evidence="1">16S rRNA dimethyladenosine transferase</fullName>
    </alternativeName>
    <alternativeName>
        <fullName evidence="1">16S rRNA dimethylase</fullName>
    </alternativeName>
    <alternativeName>
        <fullName evidence="1">S-adenosylmethionine-6-N', N'-adenosyl(rRNA) dimethyltransferase</fullName>
    </alternativeName>
</protein>
<reference key="1">
    <citation type="submission" date="2008-02" db="EMBL/GenBank/DDBJ databases">
        <title>Complete sequence of Shewanella woodyi ATCC 51908.</title>
        <authorList>
            <consortium name="US DOE Joint Genome Institute"/>
            <person name="Copeland A."/>
            <person name="Lucas S."/>
            <person name="Lapidus A."/>
            <person name="Glavina del Rio T."/>
            <person name="Dalin E."/>
            <person name="Tice H."/>
            <person name="Bruce D."/>
            <person name="Goodwin L."/>
            <person name="Pitluck S."/>
            <person name="Sims D."/>
            <person name="Brettin T."/>
            <person name="Detter J.C."/>
            <person name="Han C."/>
            <person name="Kuske C.R."/>
            <person name="Schmutz J."/>
            <person name="Larimer F."/>
            <person name="Land M."/>
            <person name="Hauser L."/>
            <person name="Kyrpides N."/>
            <person name="Lykidis A."/>
            <person name="Zhao J.-S."/>
            <person name="Richardson P."/>
        </authorList>
    </citation>
    <scope>NUCLEOTIDE SEQUENCE [LARGE SCALE GENOMIC DNA]</scope>
    <source>
        <strain>ATCC 51908 / MS32</strain>
    </source>
</reference>
<accession>B1KGH9</accession>
<gene>
    <name evidence="1" type="primary">rsmA</name>
    <name evidence="1" type="synonym">ksgA</name>
    <name type="ordered locus">Swoo_1014</name>
</gene>
<dbReference type="EC" id="2.1.1.182" evidence="1"/>
<dbReference type="EMBL" id="CP000961">
    <property type="protein sequence ID" value="ACA85307.1"/>
    <property type="molecule type" value="Genomic_DNA"/>
</dbReference>
<dbReference type="RefSeq" id="WP_012323654.1">
    <property type="nucleotide sequence ID" value="NC_010506.1"/>
</dbReference>
<dbReference type="SMR" id="B1KGH9"/>
<dbReference type="STRING" id="392500.Swoo_1014"/>
<dbReference type="KEGG" id="swd:Swoo_1014"/>
<dbReference type="eggNOG" id="COG0030">
    <property type="taxonomic scope" value="Bacteria"/>
</dbReference>
<dbReference type="HOGENOM" id="CLU_041220_0_1_6"/>
<dbReference type="Proteomes" id="UP000002168">
    <property type="component" value="Chromosome"/>
</dbReference>
<dbReference type="GO" id="GO:0005829">
    <property type="term" value="C:cytosol"/>
    <property type="evidence" value="ECO:0007669"/>
    <property type="project" value="TreeGrafter"/>
</dbReference>
<dbReference type="GO" id="GO:0052908">
    <property type="term" value="F:16S rRNA (adenine(1518)-N(6)/adenine(1519)-N(6))-dimethyltransferase activity"/>
    <property type="evidence" value="ECO:0007669"/>
    <property type="project" value="UniProtKB-EC"/>
</dbReference>
<dbReference type="GO" id="GO:0003723">
    <property type="term" value="F:RNA binding"/>
    <property type="evidence" value="ECO:0007669"/>
    <property type="project" value="UniProtKB-KW"/>
</dbReference>
<dbReference type="FunFam" id="1.10.8.100:FF:000001">
    <property type="entry name" value="Ribosomal RNA small subunit methyltransferase A"/>
    <property type="match status" value="1"/>
</dbReference>
<dbReference type="FunFam" id="3.40.50.150:FF:000006">
    <property type="entry name" value="Ribosomal RNA small subunit methyltransferase A"/>
    <property type="match status" value="1"/>
</dbReference>
<dbReference type="Gene3D" id="1.10.8.100">
    <property type="entry name" value="Ribosomal RNA adenine dimethylase-like, domain 2"/>
    <property type="match status" value="1"/>
</dbReference>
<dbReference type="Gene3D" id="3.40.50.150">
    <property type="entry name" value="Vaccinia Virus protein VP39"/>
    <property type="match status" value="1"/>
</dbReference>
<dbReference type="HAMAP" id="MF_00607">
    <property type="entry name" value="16SrRNA_methyltr_A"/>
    <property type="match status" value="1"/>
</dbReference>
<dbReference type="InterPro" id="IPR001737">
    <property type="entry name" value="KsgA/Erm"/>
</dbReference>
<dbReference type="InterPro" id="IPR023165">
    <property type="entry name" value="rRNA_Ade_diMease-like_C"/>
</dbReference>
<dbReference type="InterPro" id="IPR020596">
    <property type="entry name" value="rRNA_Ade_Mease_Trfase_CS"/>
</dbReference>
<dbReference type="InterPro" id="IPR020598">
    <property type="entry name" value="rRNA_Ade_methylase_Trfase_N"/>
</dbReference>
<dbReference type="InterPro" id="IPR011530">
    <property type="entry name" value="rRNA_adenine_dimethylase"/>
</dbReference>
<dbReference type="InterPro" id="IPR029063">
    <property type="entry name" value="SAM-dependent_MTases_sf"/>
</dbReference>
<dbReference type="NCBIfam" id="TIGR00755">
    <property type="entry name" value="ksgA"/>
    <property type="match status" value="1"/>
</dbReference>
<dbReference type="PANTHER" id="PTHR11727">
    <property type="entry name" value="DIMETHYLADENOSINE TRANSFERASE"/>
    <property type="match status" value="1"/>
</dbReference>
<dbReference type="PANTHER" id="PTHR11727:SF7">
    <property type="entry name" value="DIMETHYLADENOSINE TRANSFERASE-RELATED"/>
    <property type="match status" value="1"/>
</dbReference>
<dbReference type="Pfam" id="PF00398">
    <property type="entry name" value="RrnaAD"/>
    <property type="match status" value="1"/>
</dbReference>
<dbReference type="SMART" id="SM00650">
    <property type="entry name" value="rADc"/>
    <property type="match status" value="1"/>
</dbReference>
<dbReference type="SUPFAM" id="SSF53335">
    <property type="entry name" value="S-adenosyl-L-methionine-dependent methyltransferases"/>
    <property type="match status" value="1"/>
</dbReference>
<dbReference type="PROSITE" id="PS01131">
    <property type="entry name" value="RRNA_A_DIMETH"/>
    <property type="match status" value="1"/>
</dbReference>
<dbReference type="PROSITE" id="PS51689">
    <property type="entry name" value="SAM_RNA_A_N6_MT"/>
    <property type="match status" value="1"/>
</dbReference>